<keyword id="KW-0002">3D-structure</keyword>
<keyword id="KW-0963">Cytoplasm</keyword>
<keyword id="KW-0903">Direct protein sequencing</keyword>
<keyword id="KW-0324">Glycolysis</keyword>
<keyword id="KW-0520">NAD</keyword>
<keyword id="KW-0547">Nucleotide-binding</keyword>
<keyword id="KW-0560">Oxidoreductase</keyword>
<accession>P00362</accession>
<organism>
    <name type="scientific">Geobacillus stearothermophilus</name>
    <name type="common">Bacillus stearothermophilus</name>
    <dbReference type="NCBI Taxonomy" id="1422"/>
    <lineage>
        <taxon>Bacteria</taxon>
        <taxon>Bacillati</taxon>
        <taxon>Bacillota</taxon>
        <taxon>Bacilli</taxon>
        <taxon>Bacillales</taxon>
        <taxon>Anoxybacillaceae</taxon>
        <taxon>Geobacillus</taxon>
    </lineage>
</organism>
<feature type="initiator methionine" description="Removed" evidence="8">
    <location>
        <position position="1"/>
    </location>
</feature>
<feature type="chain" id="PRO_0000145633" description="Glyceraldehyde-3-phosphate dehydrogenase">
    <location>
        <begin position="2"/>
        <end position="335"/>
    </location>
</feature>
<feature type="active site" description="Nucleophile" evidence="4 12">
    <location>
        <position position="152"/>
    </location>
</feature>
<feature type="binding site" evidence="3 4 7 9">
    <location>
        <begin position="12"/>
        <end position="13"/>
    </location>
    <ligand>
        <name>NAD(+)</name>
        <dbReference type="ChEBI" id="CHEBI:57540"/>
    </ligand>
</feature>
<feature type="binding site" evidence="3 4 7 9">
    <location>
        <position position="34"/>
    </location>
    <ligand>
        <name>NAD(+)</name>
        <dbReference type="ChEBI" id="CHEBI:57540"/>
    </ligand>
</feature>
<feature type="binding site" evidence="3 4 7 9">
    <location>
        <position position="78"/>
    </location>
    <ligand>
        <name>NAD(+)</name>
        <dbReference type="ChEBI" id="CHEBI:57540"/>
    </ligand>
</feature>
<feature type="binding site" evidence="3 4 7 9">
    <location>
        <position position="120"/>
    </location>
    <ligand>
        <name>NAD(+)</name>
        <dbReference type="ChEBI" id="CHEBI:57540"/>
    </ligand>
</feature>
<feature type="binding site" evidence="3 4 6 7 9">
    <location>
        <begin position="151"/>
        <end position="153"/>
    </location>
    <ligand>
        <name>D-glyceraldehyde 3-phosphate</name>
        <dbReference type="ChEBI" id="CHEBI:59776"/>
    </ligand>
</feature>
<feature type="binding site" evidence="3 4 6 7 9">
    <location>
        <position position="182"/>
    </location>
    <ligand>
        <name>D-glyceraldehyde 3-phosphate</name>
        <dbReference type="ChEBI" id="CHEBI:59776"/>
    </ligand>
</feature>
<feature type="binding site" evidence="3 4 7 9">
    <location>
        <position position="183"/>
    </location>
    <ligand>
        <name>NAD(+)</name>
        <dbReference type="ChEBI" id="CHEBI:57540"/>
    </ligand>
</feature>
<feature type="binding site" evidence="3 4 9">
    <location>
        <position position="197"/>
    </location>
    <ligand>
        <name>D-glyceraldehyde 3-phosphate</name>
        <dbReference type="ChEBI" id="CHEBI:59776"/>
    </ligand>
</feature>
<feature type="binding site" evidence="4 6 7 9">
    <location>
        <begin position="210"/>
        <end position="211"/>
    </location>
    <ligand>
        <name>D-glyceraldehyde 3-phosphate</name>
        <dbReference type="ChEBI" id="CHEBI:59776"/>
    </ligand>
</feature>
<feature type="binding site" evidence="3 4 6 7 9">
    <location>
        <position position="233"/>
    </location>
    <ligand>
        <name>D-glyceraldehyde 3-phosphate</name>
        <dbReference type="ChEBI" id="CHEBI:59776"/>
    </ligand>
</feature>
<feature type="binding site" evidence="3 4 7 9">
    <location>
        <position position="315"/>
    </location>
    <ligand>
        <name>NAD(+)</name>
        <dbReference type="ChEBI" id="CHEBI:57540"/>
    </ligand>
</feature>
<feature type="site" description="Activates thiol group during catalysis" evidence="2">
    <location>
        <position position="179"/>
    </location>
</feature>
<feature type="mutagenesis site" description="In mutant B-S, the recognition of NAD is slightly affected; when associated with A-190 and S-191." evidence="9">
    <original>LTD</original>
    <variation>TGG</variation>
    <location>
        <begin position="35"/>
        <end position="37"/>
    </location>
</feature>
<feature type="mutagenesis site" description="Loss of dehydrogenase activity." evidence="3 9">
    <original>C</original>
    <variation>A</variation>
    <location>
        <position position="152"/>
    </location>
</feature>
<feature type="mutagenesis site" description="Possesses a low residual dehydrogenase activity." evidence="3">
    <original>C</original>
    <variation>S</variation>
    <location>
        <position position="152"/>
    </location>
</feature>
<feature type="mutagenesis site" description="In mutant D32G-S, a strong alteration of the affinity for NAD is observed; when associated with S-191. In mutant B-S, the recognition of NAD is slightly affected; when associated with 35-T--G-37 and S-191." evidence="9">
    <original>L</original>
    <variation>A</variation>
    <location>
        <position position="190"/>
    </location>
</feature>
<feature type="mutagenesis site" description="In mutant D32G-S, a strong alteration of the affinity for NAD is observed; when associated with A-190. In mutant B-S, the recognition of NAD is slightly affected; when associated with 35-T--G-37 and A-190." evidence="9">
    <original>P</original>
    <variation>S</variation>
    <location>
        <position position="191"/>
    </location>
</feature>
<feature type="strand" evidence="14">
    <location>
        <begin position="3"/>
        <end position="9"/>
    </location>
</feature>
<feature type="helix" evidence="14">
    <location>
        <begin position="12"/>
        <end position="21"/>
    </location>
</feature>
<feature type="strand" evidence="14">
    <location>
        <begin position="27"/>
        <end position="33"/>
    </location>
</feature>
<feature type="helix" evidence="14">
    <location>
        <begin position="38"/>
        <end position="46"/>
    </location>
</feature>
<feature type="turn" evidence="14">
    <location>
        <begin position="49"/>
        <end position="51"/>
    </location>
</feature>
<feature type="strand" evidence="14">
    <location>
        <begin position="58"/>
        <end position="61"/>
    </location>
</feature>
<feature type="strand" evidence="14">
    <location>
        <begin position="64"/>
        <end position="67"/>
    </location>
</feature>
<feature type="strand" evidence="14">
    <location>
        <begin position="70"/>
        <end position="75"/>
    </location>
</feature>
<feature type="helix" evidence="14">
    <location>
        <begin position="80"/>
        <end position="82"/>
    </location>
</feature>
<feature type="helix" evidence="14">
    <location>
        <begin position="86"/>
        <end position="88"/>
    </location>
</feature>
<feature type="strand" evidence="14">
    <location>
        <begin position="92"/>
        <end position="95"/>
    </location>
</feature>
<feature type="strand" evidence="14">
    <location>
        <begin position="97"/>
        <end position="99"/>
    </location>
</feature>
<feature type="helix" evidence="14">
    <location>
        <begin position="103"/>
        <end position="106"/>
    </location>
</feature>
<feature type="helix" evidence="14">
    <location>
        <begin position="108"/>
        <end position="111"/>
    </location>
</feature>
<feature type="strand" evidence="14">
    <location>
        <begin position="115"/>
        <end position="121"/>
    </location>
</feature>
<feature type="strand" evidence="14">
    <location>
        <begin position="127"/>
        <end position="129"/>
    </location>
</feature>
<feature type="turn" evidence="14">
    <location>
        <begin position="132"/>
        <end position="134"/>
    </location>
</feature>
<feature type="helix" evidence="14">
    <location>
        <begin position="136"/>
        <end position="138"/>
    </location>
</feature>
<feature type="turn" evidence="14">
    <location>
        <begin position="141"/>
        <end position="143"/>
    </location>
</feature>
<feature type="strand" evidence="14">
    <location>
        <begin position="146"/>
        <end position="148"/>
    </location>
</feature>
<feature type="helix" evidence="14">
    <location>
        <begin position="152"/>
        <end position="168"/>
    </location>
</feature>
<feature type="strand" evidence="14">
    <location>
        <begin position="170"/>
        <end position="180"/>
    </location>
</feature>
<feature type="strand" evidence="14">
    <location>
        <begin position="185"/>
        <end position="189"/>
    </location>
</feature>
<feature type="turn" evidence="14">
    <location>
        <begin position="195"/>
        <end position="198"/>
    </location>
</feature>
<feature type="turn" evidence="14">
    <location>
        <begin position="201"/>
        <end position="203"/>
    </location>
</feature>
<feature type="strand" evidence="14">
    <location>
        <begin position="206"/>
        <end position="209"/>
    </location>
</feature>
<feature type="helix" evidence="14">
    <location>
        <begin position="212"/>
        <end position="219"/>
    </location>
</feature>
<feature type="helix" evidence="14">
    <location>
        <begin position="221"/>
        <end position="223"/>
    </location>
</feature>
<feature type="turn" evidence="14">
    <location>
        <begin position="224"/>
        <end position="226"/>
    </location>
</feature>
<feature type="strand" evidence="14">
    <location>
        <begin position="227"/>
        <end position="235"/>
    </location>
</feature>
<feature type="strand" evidence="14">
    <location>
        <begin position="240"/>
        <end position="250"/>
    </location>
</feature>
<feature type="helix" evidence="14">
    <location>
        <begin position="254"/>
        <end position="266"/>
    </location>
</feature>
<feature type="turn" evidence="14">
    <location>
        <begin position="267"/>
        <end position="272"/>
    </location>
</feature>
<feature type="strand" evidence="14">
    <location>
        <begin position="273"/>
        <end position="276"/>
    </location>
</feature>
<feature type="helix" evidence="14">
    <location>
        <begin position="282"/>
        <end position="285"/>
    </location>
</feature>
<feature type="strand" evidence="14">
    <location>
        <begin position="290"/>
        <end position="295"/>
    </location>
</feature>
<feature type="helix" evidence="14">
    <location>
        <begin position="296"/>
        <end position="298"/>
    </location>
</feature>
<feature type="strand" evidence="14">
    <location>
        <begin position="300"/>
        <end position="302"/>
    </location>
</feature>
<feature type="turn" evidence="14">
    <location>
        <begin position="303"/>
        <end position="305"/>
    </location>
</feature>
<feature type="strand" evidence="14">
    <location>
        <begin position="306"/>
        <end position="313"/>
    </location>
</feature>
<feature type="helix" evidence="14">
    <location>
        <begin position="317"/>
        <end position="332"/>
    </location>
</feature>
<evidence type="ECO:0000250" key="1">
    <source>
        <dbReference type="UniProtKB" id="P09124"/>
    </source>
</evidence>
<evidence type="ECO:0000250" key="2">
    <source>
        <dbReference type="UniProtKB" id="Q6GIL8"/>
    </source>
</evidence>
<evidence type="ECO:0000269" key="3">
    <source>
    </source>
</evidence>
<evidence type="ECO:0000269" key="4">
    <source>
    </source>
</evidence>
<evidence type="ECO:0000269" key="5">
    <source>
    </source>
</evidence>
<evidence type="ECO:0000269" key="6">
    <source>
    </source>
</evidence>
<evidence type="ECO:0000269" key="7">
    <source>
    </source>
</evidence>
<evidence type="ECO:0000269" key="8">
    <source>
    </source>
</evidence>
<evidence type="ECO:0000269" key="9">
    <source>
    </source>
</evidence>
<evidence type="ECO:0000303" key="10">
    <source>
    </source>
</evidence>
<evidence type="ECO:0000305" key="11"/>
<evidence type="ECO:0000305" key="12">
    <source>
    </source>
</evidence>
<evidence type="ECO:0000305" key="13">
    <source>
    </source>
</evidence>
<evidence type="ECO:0007829" key="14">
    <source>
        <dbReference type="PDB" id="3CMC"/>
    </source>
</evidence>
<reference key="1">
    <citation type="journal article" date="1989" name="Gene">
        <title>Nucleotide sequences of genes encoding heat-stable and heat-labile glyceraldehyde-3-phosphate dehydrogenases; amino acid sequence and protein thermostability.</title>
        <authorList>
            <person name="Tesfay H.S."/>
            <person name="Amelunxen R.E."/>
            <person name="Goldberg I.D."/>
        </authorList>
    </citation>
    <scope>NUCLEOTIDE SEQUENCE [GENOMIC DNA]</scope>
    <scope>RETRACTED PAPER</scope>
</reference>
<reference key="2">
    <citation type="journal article" date="1990" name="Gene">
        <authorList>
            <person name="Tesfay H.S."/>
            <person name="Amelunxen R.E."/>
            <person name="Goldberg I.D."/>
        </authorList>
    </citation>
    <scope>ERRATUM OF PUBMED:2684782</scope>
    <scope>RETRACTION NOTICE OF PUBMED:2684782</scope>
</reference>
<reference key="3">
    <citation type="journal article" date="1989" name="Gene">
        <title>Nucleotide sequence determination of the DNA region coding for Bacillus stearothermophilus glyceraldehyde-3-phosphate dehydrogenase and of the flanking DNA regions required for its expression in Escherichia coli.</title>
        <authorList>
            <person name="Branlant C."/>
            <person name="Oster T."/>
            <person name="Branlant G."/>
        </authorList>
    </citation>
    <scope>NUCLEOTIDE SEQUENCE [GENOMIC DNA]</scope>
</reference>
<reference key="4">
    <citation type="journal article" date="1980" name="Eur. J. Biochem.">
        <title>D-glyceraldehyde-3-phosphate dehydrogenase. Complete amino-acid sequence of the enzyme from Bacillus stearothermophilus.</title>
        <authorList>
            <person name="Walker J.E."/>
            <person name="Carne A.F."/>
            <person name="Runswick M.J."/>
            <person name="Bridgen J."/>
            <person name="Harris J.I."/>
        </authorList>
    </citation>
    <scope>PROTEIN SEQUENCE OF 2-335</scope>
</reference>
<reference key="5">
    <citation type="journal article" date="1977" name="Nature">
        <title>Sequence and structure of D-glyceraldehyde 3-phosphate dehydrogenase from Bacillus stearothermophilus.</title>
        <authorList>
            <person name="Biesecker G."/>
            <person name="Harris J.I."/>
            <person name="Thierry J.-C."/>
            <person name="Walker J.E."/>
            <person name="Wonacott A.J."/>
        </authorList>
    </citation>
    <scope>X-RAY CRYSTALLOGRAPHY (2.7 ANGSTROMS)</scope>
    <scope>SUBUNIT</scope>
</reference>
<reference key="6">
    <citation type="journal article" date="1987" name="J. Mol. Biol.">
        <title>Structure of holo-glyceraldehyde-3-phosphate dehydrogenase from Bacillus stearothermophilus at 1.8-A resolution.</title>
        <authorList>
            <person name="Skarzynski T."/>
            <person name="Moody P.C.E."/>
            <person name="Wonacott A.J."/>
        </authorList>
    </citation>
    <scope>X-RAY CRYSTALLOGRAPHY (1.8 ANGSTROMS) IN COMPLEX WITH NAD AND SUBSTRATE ANALOG</scope>
    <scope>SUBUNIT</scope>
</reference>
<reference key="7">
    <citation type="journal article" date="1988" name="J. Mol. Biol.">
        <title>Coenzyme-induced conformational changes in glyceraldehyde-3-phosphate dehydrogenase from Bacillus stearothermophilus.</title>
        <authorList>
            <person name="Skarzynski T."/>
            <person name="Wonacott A.J."/>
        </authorList>
    </citation>
    <scope>X-RAY CRYSTALLOGRAPHY (2.50 ANGSTROMS) OF 2-335 IN COMPLEX WITH SUBSTRATE ANALOG</scope>
    <scope>SUBUNIT</scope>
</reference>
<reference key="8">
    <citation type="journal article" date="1997" name="J. Mol. Biol.">
        <title>A crystallographic comparison between mutated glyceraldehyde-3-phosphate dehydrogenases from Bacillus stearothermophilus complexed with either NAD+ or NADP+.</title>
        <authorList>
            <person name="Didierjean C."/>
            <person name="Rahuel-Clermont S."/>
            <person name="Vitoux B."/>
            <person name="Dideberg O."/>
            <person name="Branlant G."/>
            <person name="Aubry A."/>
        </authorList>
    </citation>
    <scope>X-RAY CRYSTALLOGRAPHY (2.45 ANGSTROMS) OF B-S AND D32G-S MUTANTS IN COMPLEXES WITH NAD AND SUBSTRATE ANALOG</scope>
    <scope>MUTAGENESIS OF 35-LEU--ASP-37; CYS-152; LEU-190 AND PRO-191</scope>
    <scope>SUBUNIT</scope>
</reference>
<reference key="9">
    <citation type="journal article" date="2003" name="J. Biol. Chem.">
        <title>Crystal structure of two ternary complexes of phosphorylating glyceraldehyde-3-phosphate dehydrogenase from Bacillus stearothermophilus with NAD and D-glyceraldehyde 3-phosphate.</title>
        <authorList>
            <person name="Didierjean C."/>
            <person name="Corbier C."/>
            <person name="Fatih M."/>
            <person name="Favier F."/>
            <person name="Boschi-Muller S."/>
            <person name="Branlant G."/>
            <person name="Aubry A."/>
        </authorList>
    </citation>
    <scope>X-RAY CRYSTALLOGRAPHY (2.11 ANGSTROMS) OF MUTANT ALA-152 IN COMPLEX WITH NAD AND GLYCERALDEHYDE 3-PHOSPHATE</scope>
    <scope>FUNCTION</scope>
    <scope>MUTAGENESIS OF CYS-152</scope>
    <scope>REACTION MECHANISM</scope>
    <scope>SUBUNIT</scope>
</reference>
<reference key="10">
    <citation type="journal article" date="2008" name="J. Biol. Chem.">
        <title>Trapping of the thioacylglyceraldehyde-3-phosphate dehydrogenase intermediate from Bacillus stearothermophilus. Direct evidence for a flip-flop mechanism.</title>
        <authorList>
            <person name="Moniot S."/>
            <person name="Bruno S."/>
            <person name="Vonrhein C."/>
            <person name="Didierjean C."/>
            <person name="Boschi-Muller S."/>
            <person name="Vas M."/>
            <person name="Bricogne G."/>
            <person name="Branlant G."/>
            <person name="Mozzarelli A."/>
            <person name="Corbier C."/>
        </authorList>
    </citation>
    <scope>X-RAY CRYSTALLOGRAPHY (1.77 ANGSTROMS) OF 2-335 IN COMPLEX WITH NAD AND GLYCERALDEHYDE-3-PHOSPHATE</scope>
    <scope>FUNCTION</scope>
    <scope>ACTIVE SITE</scope>
    <scope>REACTION MECHANISM</scope>
    <scope>SUBUNIT</scope>
</reference>
<name>G3P_GEOSE</name>
<protein>
    <recommendedName>
        <fullName evidence="10">Glyceraldehyde-3-phosphate dehydrogenase</fullName>
        <shortName evidence="10">GAPDH</shortName>
        <ecNumber evidence="1">1.2.1.12</ecNumber>
    </recommendedName>
    <alternativeName>
        <fullName evidence="10">NAD-dependent glyceraldehyde-3-phosphate dehydrogenase</fullName>
    </alternativeName>
</protein>
<dbReference type="EC" id="1.2.1.12" evidence="1"/>
<dbReference type="EMBL" id="M24493">
    <property type="protein sequence ID" value="AAA22461.1"/>
    <property type="molecule type" value="Genomic_DNA"/>
</dbReference>
<dbReference type="PIR" id="JS0164">
    <property type="entry name" value="DEBSGF"/>
</dbReference>
<dbReference type="RefSeq" id="WP_033015082.1">
    <property type="nucleotide sequence ID" value="NZ_RCTK01000017.1"/>
</dbReference>
<dbReference type="PDB" id="1DBV">
    <property type="method" value="X-ray"/>
    <property type="resolution" value="2.50 A"/>
    <property type="chains" value="O/P/Q/R=2-335"/>
</dbReference>
<dbReference type="PDB" id="1GD1">
    <property type="method" value="X-ray"/>
    <property type="resolution" value="1.80 A"/>
    <property type="chains" value="O/P/Q/R=2-335"/>
</dbReference>
<dbReference type="PDB" id="1NPT">
    <property type="method" value="X-ray"/>
    <property type="resolution" value="2.18 A"/>
    <property type="chains" value="O/P/Q/R=2-335"/>
</dbReference>
<dbReference type="PDB" id="1NQ5">
    <property type="method" value="X-ray"/>
    <property type="resolution" value="2.11 A"/>
    <property type="chains" value="A/C/O/Q=2-335"/>
</dbReference>
<dbReference type="PDB" id="1NQA">
    <property type="method" value="X-ray"/>
    <property type="resolution" value="2.20 A"/>
    <property type="chains" value="O/P/Q/R=2-335"/>
</dbReference>
<dbReference type="PDB" id="1NQO">
    <property type="method" value="X-ray"/>
    <property type="resolution" value="2.01 A"/>
    <property type="chains" value="A/C/O/Q=2-335"/>
</dbReference>
<dbReference type="PDB" id="2DBV">
    <property type="method" value="X-ray"/>
    <property type="resolution" value="2.20 A"/>
    <property type="chains" value="O/P/Q/R=2-335"/>
</dbReference>
<dbReference type="PDB" id="2GD1">
    <property type="method" value="X-ray"/>
    <property type="resolution" value="2.50 A"/>
    <property type="chains" value="O/P/Q/R=2-335"/>
</dbReference>
<dbReference type="PDB" id="3CMC">
    <property type="method" value="X-ray"/>
    <property type="resolution" value="1.77 A"/>
    <property type="chains" value="O/P/Q/R=2-335"/>
</dbReference>
<dbReference type="PDB" id="3DBV">
    <property type="method" value="X-ray"/>
    <property type="resolution" value="2.45 A"/>
    <property type="chains" value="O/P/Q/R=2-335"/>
</dbReference>
<dbReference type="PDB" id="4DBV">
    <property type="method" value="X-ray"/>
    <property type="resolution" value="2.50 A"/>
    <property type="chains" value="O/P/Q/R=2-335"/>
</dbReference>
<dbReference type="PDBsum" id="1DBV"/>
<dbReference type="PDBsum" id="1GD1"/>
<dbReference type="PDBsum" id="1NPT"/>
<dbReference type="PDBsum" id="1NQ5"/>
<dbReference type="PDBsum" id="1NQA"/>
<dbReference type="PDBsum" id="1NQO"/>
<dbReference type="PDBsum" id="2DBV"/>
<dbReference type="PDBsum" id="2GD1"/>
<dbReference type="PDBsum" id="3CMC"/>
<dbReference type="PDBsum" id="3DBV"/>
<dbReference type="PDBsum" id="4DBV"/>
<dbReference type="SMR" id="P00362"/>
<dbReference type="DrugBank" id="DB02263">
    <property type="generic name" value="D-glyceraldehyde 3-phosphate"/>
</dbReference>
<dbReference type="GeneID" id="89613291"/>
<dbReference type="OrthoDB" id="9803304at2"/>
<dbReference type="BRENDA" id="1.2.1.12">
    <property type="organism ID" value="623"/>
</dbReference>
<dbReference type="SABIO-RK" id="P00362"/>
<dbReference type="UniPathway" id="UPA00109">
    <property type="reaction ID" value="UER00184"/>
</dbReference>
<dbReference type="EvolutionaryTrace" id="P00362"/>
<dbReference type="GO" id="GO:0005737">
    <property type="term" value="C:cytoplasm"/>
    <property type="evidence" value="ECO:0007669"/>
    <property type="project" value="UniProtKB-SubCell"/>
</dbReference>
<dbReference type="GO" id="GO:0004365">
    <property type="term" value="F:glyceraldehyde-3-phosphate dehydrogenase (NAD+) (phosphorylating) activity"/>
    <property type="evidence" value="ECO:0000250"/>
    <property type="project" value="UniProtKB"/>
</dbReference>
<dbReference type="GO" id="GO:0051287">
    <property type="term" value="F:NAD binding"/>
    <property type="evidence" value="ECO:0000314"/>
    <property type="project" value="UniProtKB"/>
</dbReference>
<dbReference type="GO" id="GO:0050661">
    <property type="term" value="F:NADP binding"/>
    <property type="evidence" value="ECO:0007669"/>
    <property type="project" value="InterPro"/>
</dbReference>
<dbReference type="GO" id="GO:0006006">
    <property type="term" value="P:glucose metabolic process"/>
    <property type="evidence" value="ECO:0007669"/>
    <property type="project" value="InterPro"/>
</dbReference>
<dbReference type="GO" id="GO:0006096">
    <property type="term" value="P:glycolytic process"/>
    <property type="evidence" value="ECO:0007669"/>
    <property type="project" value="UniProtKB-UniPathway"/>
</dbReference>
<dbReference type="CDD" id="cd18126">
    <property type="entry name" value="GAPDH_I_C"/>
    <property type="match status" value="1"/>
</dbReference>
<dbReference type="CDD" id="cd05214">
    <property type="entry name" value="GAPDH_I_N"/>
    <property type="match status" value="1"/>
</dbReference>
<dbReference type="FunFam" id="3.30.360.10:FF:000002">
    <property type="entry name" value="Glyceraldehyde-3-phosphate dehydrogenase"/>
    <property type="match status" value="1"/>
</dbReference>
<dbReference type="FunFam" id="3.40.50.720:FF:000001">
    <property type="entry name" value="Glyceraldehyde-3-phosphate dehydrogenase"/>
    <property type="match status" value="1"/>
</dbReference>
<dbReference type="Gene3D" id="3.30.360.10">
    <property type="entry name" value="Dihydrodipicolinate Reductase, domain 2"/>
    <property type="match status" value="1"/>
</dbReference>
<dbReference type="Gene3D" id="3.40.50.720">
    <property type="entry name" value="NAD(P)-binding Rossmann-like Domain"/>
    <property type="match status" value="1"/>
</dbReference>
<dbReference type="InterPro" id="IPR020831">
    <property type="entry name" value="GlycerAld/Erythrose_P_DH"/>
</dbReference>
<dbReference type="InterPro" id="IPR020830">
    <property type="entry name" value="GlycerAld_3-P_DH_AS"/>
</dbReference>
<dbReference type="InterPro" id="IPR020829">
    <property type="entry name" value="GlycerAld_3-P_DH_cat"/>
</dbReference>
<dbReference type="InterPro" id="IPR020828">
    <property type="entry name" value="GlycerAld_3-P_DH_NAD(P)-bd"/>
</dbReference>
<dbReference type="InterPro" id="IPR006424">
    <property type="entry name" value="Glyceraldehyde-3-P_DH_1"/>
</dbReference>
<dbReference type="InterPro" id="IPR036291">
    <property type="entry name" value="NAD(P)-bd_dom_sf"/>
</dbReference>
<dbReference type="NCBIfam" id="TIGR01534">
    <property type="entry name" value="GAPDH-I"/>
    <property type="match status" value="1"/>
</dbReference>
<dbReference type="PANTHER" id="PTHR43148">
    <property type="entry name" value="GLYCERALDEHYDE-3-PHOSPHATE DEHYDROGENASE 2"/>
    <property type="match status" value="1"/>
</dbReference>
<dbReference type="Pfam" id="PF02800">
    <property type="entry name" value="Gp_dh_C"/>
    <property type="match status" value="1"/>
</dbReference>
<dbReference type="Pfam" id="PF00044">
    <property type="entry name" value="Gp_dh_N"/>
    <property type="match status" value="1"/>
</dbReference>
<dbReference type="PIRSF" id="PIRSF000149">
    <property type="entry name" value="GAP_DH"/>
    <property type="match status" value="1"/>
</dbReference>
<dbReference type="PRINTS" id="PR00078">
    <property type="entry name" value="G3PDHDRGNASE"/>
</dbReference>
<dbReference type="SMART" id="SM00846">
    <property type="entry name" value="Gp_dh_N"/>
    <property type="match status" value="1"/>
</dbReference>
<dbReference type="SUPFAM" id="SSF55347">
    <property type="entry name" value="Glyceraldehyde-3-phosphate dehydrogenase-like, C-terminal domain"/>
    <property type="match status" value="1"/>
</dbReference>
<dbReference type="SUPFAM" id="SSF51735">
    <property type="entry name" value="NAD(P)-binding Rossmann-fold domains"/>
    <property type="match status" value="1"/>
</dbReference>
<dbReference type="PROSITE" id="PS00071">
    <property type="entry name" value="GAPDH"/>
    <property type="match status" value="1"/>
</dbReference>
<proteinExistence type="evidence at protein level"/>
<sequence>MAVKVGINGFGRIGRNVFRAALKNPDIEVVAVNDLTDANTLAHLLKYDSVHGRLDAEVSVNGNNLVVNGKEIIVKAERDPENLAWGEIGVDIVVESTGRFTKREDAAKHLEAGAKKVIISAPAKNEDITIVMGVNQDKYDPKAHHVISNASCTTNCLAPFAKVLHEQFGIVRGMMTTVHSYTNDQRILDLPHKDLRRARAAAESIIPTTTGAAKAVALVLPELKGKLNGMAMRVPTPNVSVVDLVAELEKEVTVEEVNAALKAAAEGELKGILAYSEEPLVSRDYNGSTVSSTIDALSTMVIDGKMVKVVSWYDNETGYSHRVVDLAAYIASKGL</sequence>
<comment type="function">
    <text evidence="3 4">Catalyzes the oxidative phosphorylation of glyceraldehyde 3-phosphate (G3P) to 1,3-bisphosphoglycerate (BPG) using the cofactor NAD. The first reaction step involves the formation of a hemiacetal intermediate between G3P and a cysteine residue, and this hemiacetal intermediate is then oxidized to a thioester, with concomitant reduction of NAD to NADH. The reduced NADH is then exchanged with the second NAD, and the thioester is attacked by a nucleophilic inorganic phosphate to produce BPG.</text>
</comment>
<comment type="catalytic activity">
    <reaction evidence="1">
        <text>D-glyceraldehyde 3-phosphate + phosphate + NAD(+) = (2R)-3-phospho-glyceroyl phosphate + NADH + H(+)</text>
        <dbReference type="Rhea" id="RHEA:10300"/>
        <dbReference type="ChEBI" id="CHEBI:15378"/>
        <dbReference type="ChEBI" id="CHEBI:43474"/>
        <dbReference type="ChEBI" id="CHEBI:57540"/>
        <dbReference type="ChEBI" id="CHEBI:57604"/>
        <dbReference type="ChEBI" id="CHEBI:57945"/>
        <dbReference type="ChEBI" id="CHEBI:59776"/>
        <dbReference type="EC" id="1.2.1.12"/>
    </reaction>
</comment>
<comment type="pathway">
    <text evidence="11">Carbohydrate degradation; glycolysis; pyruvate from D-glyceraldehyde 3-phosphate: step 1/5.</text>
</comment>
<comment type="subunit">
    <text evidence="3 4 5 6 7 9">Homotetramer.</text>
</comment>
<comment type="subcellular location">
    <subcellularLocation>
        <location evidence="13">Cytoplasm</location>
    </subcellularLocation>
</comment>
<comment type="similarity">
    <text evidence="11">Belongs to the glyceraldehyde-3-phosphate dehydrogenase family.</text>
</comment>
<comment type="caution">
    <text evidence="11">PubMed:2684782 sequence was incorrect and retracted in PubMed:2227448.</text>
</comment>
<gene>
    <name type="primary">gap</name>
</gene>